<proteinExistence type="inferred from homology"/>
<name>REX_LISMO</name>
<feature type="chain" id="PRO_0000097899" description="Redox-sensing transcriptional repressor Rex">
    <location>
        <begin position="1"/>
        <end position="215"/>
    </location>
</feature>
<feature type="DNA-binding region" description="H-T-H motif" evidence="1">
    <location>
        <begin position="18"/>
        <end position="57"/>
    </location>
</feature>
<feature type="binding site" evidence="1">
    <location>
        <begin position="92"/>
        <end position="97"/>
    </location>
    <ligand>
        <name>NAD(+)</name>
        <dbReference type="ChEBI" id="CHEBI:57540"/>
    </ligand>
</feature>
<organism>
    <name type="scientific">Listeria monocytogenes serovar 1/2a (strain ATCC BAA-679 / EGD-e)</name>
    <dbReference type="NCBI Taxonomy" id="169963"/>
    <lineage>
        <taxon>Bacteria</taxon>
        <taxon>Bacillati</taxon>
        <taxon>Bacillota</taxon>
        <taxon>Bacilli</taxon>
        <taxon>Bacillales</taxon>
        <taxon>Listeriaceae</taxon>
        <taxon>Listeria</taxon>
    </lineage>
</organism>
<evidence type="ECO:0000255" key="1">
    <source>
        <dbReference type="HAMAP-Rule" id="MF_01131"/>
    </source>
</evidence>
<accession>P60384</accession>
<accession>Q929U6</accession>
<dbReference type="EMBL" id="AL591982">
    <property type="protein sequence ID" value="CAD00150.1"/>
    <property type="molecule type" value="Genomic_DNA"/>
</dbReference>
<dbReference type="PIR" id="AH1333">
    <property type="entry name" value="AH1333"/>
</dbReference>
<dbReference type="RefSeq" id="NP_465596.1">
    <property type="nucleotide sequence ID" value="NC_003210.1"/>
</dbReference>
<dbReference type="RefSeq" id="WP_003722329.1">
    <property type="nucleotide sequence ID" value="NZ_CP149495.1"/>
</dbReference>
<dbReference type="SMR" id="P60384"/>
<dbReference type="STRING" id="169963.gene:17594757"/>
<dbReference type="PaxDb" id="169963-lmo2072"/>
<dbReference type="EnsemblBacteria" id="CAD00150">
    <property type="protein sequence ID" value="CAD00150"/>
    <property type="gene ID" value="CAD00150"/>
</dbReference>
<dbReference type="GeneID" id="984371"/>
<dbReference type="KEGG" id="lmo:lmo2072"/>
<dbReference type="PATRIC" id="fig|169963.11.peg.2120"/>
<dbReference type="eggNOG" id="COG2344">
    <property type="taxonomic scope" value="Bacteria"/>
</dbReference>
<dbReference type="HOGENOM" id="CLU_061534_1_1_9"/>
<dbReference type="OrthoDB" id="9784760at2"/>
<dbReference type="PhylomeDB" id="P60384"/>
<dbReference type="BioCyc" id="LMON169963:LMO2072-MONOMER"/>
<dbReference type="Proteomes" id="UP000000817">
    <property type="component" value="Chromosome"/>
</dbReference>
<dbReference type="GO" id="GO:0005737">
    <property type="term" value="C:cytoplasm"/>
    <property type="evidence" value="ECO:0007669"/>
    <property type="project" value="UniProtKB-SubCell"/>
</dbReference>
<dbReference type="GO" id="GO:0003677">
    <property type="term" value="F:DNA binding"/>
    <property type="evidence" value="ECO:0007669"/>
    <property type="project" value="UniProtKB-UniRule"/>
</dbReference>
<dbReference type="GO" id="GO:0003700">
    <property type="term" value="F:DNA-binding transcription factor activity"/>
    <property type="evidence" value="ECO:0007669"/>
    <property type="project" value="UniProtKB-UniRule"/>
</dbReference>
<dbReference type="GO" id="GO:0045892">
    <property type="term" value="P:negative regulation of DNA-templated transcription"/>
    <property type="evidence" value="ECO:0007669"/>
    <property type="project" value="InterPro"/>
</dbReference>
<dbReference type="GO" id="GO:0051775">
    <property type="term" value="P:response to redox state"/>
    <property type="evidence" value="ECO:0007669"/>
    <property type="project" value="InterPro"/>
</dbReference>
<dbReference type="Gene3D" id="3.40.50.720">
    <property type="entry name" value="NAD(P)-binding Rossmann-like Domain"/>
    <property type="match status" value="1"/>
</dbReference>
<dbReference type="Gene3D" id="1.10.10.10">
    <property type="entry name" value="Winged helix-like DNA-binding domain superfamily/Winged helix DNA-binding domain"/>
    <property type="match status" value="1"/>
</dbReference>
<dbReference type="HAMAP" id="MF_01131">
    <property type="entry name" value="Rex"/>
    <property type="match status" value="1"/>
</dbReference>
<dbReference type="InterPro" id="IPR003781">
    <property type="entry name" value="CoA-bd"/>
</dbReference>
<dbReference type="InterPro" id="IPR036291">
    <property type="entry name" value="NAD(P)-bd_dom_sf"/>
</dbReference>
<dbReference type="InterPro" id="IPR009718">
    <property type="entry name" value="Rex_DNA-bd_C_dom"/>
</dbReference>
<dbReference type="InterPro" id="IPR022876">
    <property type="entry name" value="Tscrpt_rep_Rex"/>
</dbReference>
<dbReference type="InterPro" id="IPR036388">
    <property type="entry name" value="WH-like_DNA-bd_sf"/>
</dbReference>
<dbReference type="InterPro" id="IPR036390">
    <property type="entry name" value="WH_DNA-bd_sf"/>
</dbReference>
<dbReference type="NCBIfam" id="NF003989">
    <property type="entry name" value="PRK05472.1-3"/>
    <property type="match status" value="1"/>
</dbReference>
<dbReference type="NCBIfam" id="NF003991">
    <property type="entry name" value="PRK05472.1-5"/>
    <property type="match status" value="1"/>
</dbReference>
<dbReference type="NCBIfam" id="NF003994">
    <property type="entry name" value="PRK05472.2-3"/>
    <property type="match status" value="1"/>
</dbReference>
<dbReference type="NCBIfam" id="NF003995">
    <property type="entry name" value="PRK05472.2-4"/>
    <property type="match status" value="1"/>
</dbReference>
<dbReference type="NCBIfam" id="NF003996">
    <property type="entry name" value="PRK05472.2-5"/>
    <property type="match status" value="1"/>
</dbReference>
<dbReference type="PANTHER" id="PTHR35786">
    <property type="entry name" value="REDOX-SENSING TRANSCRIPTIONAL REPRESSOR REX"/>
    <property type="match status" value="1"/>
</dbReference>
<dbReference type="PANTHER" id="PTHR35786:SF1">
    <property type="entry name" value="REDOX-SENSING TRANSCRIPTIONAL REPRESSOR REX 1"/>
    <property type="match status" value="1"/>
</dbReference>
<dbReference type="Pfam" id="PF02629">
    <property type="entry name" value="CoA_binding"/>
    <property type="match status" value="1"/>
</dbReference>
<dbReference type="Pfam" id="PF06971">
    <property type="entry name" value="Put_DNA-bind_N"/>
    <property type="match status" value="1"/>
</dbReference>
<dbReference type="SMART" id="SM00881">
    <property type="entry name" value="CoA_binding"/>
    <property type="match status" value="1"/>
</dbReference>
<dbReference type="SUPFAM" id="SSF51735">
    <property type="entry name" value="NAD(P)-binding Rossmann-fold domains"/>
    <property type="match status" value="1"/>
</dbReference>
<dbReference type="SUPFAM" id="SSF46785">
    <property type="entry name" value="Winged helix' DNA-binding domain"/>
    <property type="match status" value="1"/>
</dbReference>
<gene>
    <name evidence="1" type="primary">rex</name>
    <name type="ordered locus">lmo2072</name>
</gene>
<keyword id="KW-0963">Cytoplasm</keyword>
<keyword id="KW-0238">DNA-binding</keyword>
<keyword id="KW-0520">NAD</keyword>
<keyword id="KW-1185">Reference proteome</keyword>
<keyword id="KW-0678">Repressor</keyword>
<keyword id="KW-0804">Transcription</keyword>
<keyword id="KW-0805">Transcription regulation</keyword>
<reference key="1">
    <citation type="journal article" date="2001" name="Science">
        <title>Comparative genomics of Listeria species.</title>
        <authorList>
            <person name="Glaser P."/>
            <person name="Frangeul L."/>
            <person name="Buchrieser C."/>
            <person name="Rusniok C."/>
            <person name="Amend A."/>
            <person name="Baquero F."/>
            <person name="Berche P."/>
            <person name="Bloecker H."/>
            <person name="Brandt P."/>
            <person name="Chakraborty T."/>
            <person name="Charbit A."/>
            <person name="Chetouani F."/>
            <person name="Couve E."/>
            <person name="de Daruvar A."/>
            <person name="Dehoux P."/>
            <person name="Domann E."/>
            <person name="Dominguez-Bernal G."/>
            <person name="Duchaud E."/>
            <person name="Durant L."/>
            <person name="Dussurget O."/>
            <person name="Entian K.-D."/>
            <person name="Fsihi H."/>
            <person name="Garcia-del Portillo F."/>
            <person name="Garrido P."/>
            <person name="Gautier L."/>
            <person name="Goebel W."/>
            <person name="Gomez-Lopez N."/>
            <person name="Hain T."/>
            <person name="Hauf J."/>
            <person name="Jackson D."/>
            <person name="Jones L.-M."/>
            <person name="Kaerst U."/>
            <person name="Kreft J."/>
            <person name="Kuhn M."/>
            <person name="Kunst F."/>
            <person name="Kurapkat G."/>
            <person name="Madueno E."/>
            <person name="Maitournam A."/>
            <person name="Mata Vicente J."/>
            <person name="Ng E."/>
            <person name="Nedjari H."/>
            <person name="Nordsiek G."/>
            <person name="Novella S."/>
            <person name="de Pablos B."/>
            <person name="Perez-Diaz J.-C."/>
            <person name="Purcell R."/>
            <person name="Remmel B."/>
            <person name="Rose M."/>
            <person name="Schlueter T."/>
            <person name="Simoes N."/>
            <person name="Tierrez A."/>
            <person name="Vazquez-Boland J.-A."/>
            <person name="Voss H."/>
            <person name="Wehland J."/>
            <person name="Cossart P."/>
        </authorList>
    </citation>
    <scope>NUCLEOTIDE SEQUENCE [LARGE SCALE GENOMIC DNA]</scope>
    <source>
        <strain>ATCC BAA-679 / EGD-e</strain>
    </source>
</reference>
<sequence length="215" mass="24200">MMEETTKIPQATAKRLPLYHRYLKYLDESGKERVSSAELSEAVKVDSATIRRDFSYFGALGKKGYGYNVSYILDFFSKTLSQDKQTNVALIGVGNLGTALLHYNFMKNNNIKIVAAFDVDPAKVGSVQQDIPIYHLNDMEEIVRENGVEVVILTVPADEAQVTVDRLIEADVKGILNFTPARISVPKQVRVHHIDLTTELQTLIYFLENYPAKTE</sequence>
<comment type="function">
    <text evidence="1">Modulates transcription in response to changes in cellular NADH/NAD(+) redox state.</text>
</comment>
<comment type="subunit">
    <text evidence="1">Homodimer.</text>
</comment>
<comment type="subcellular location">
    <subcellularLocation>
        <location evidence="1">Cytoplasm</location>
    </subcellularLocation>
</comment>
<comment type="similarity">
    <text evidence="1">Belongs to the transcriptional regulatory Rex family.</text>
</comment>
<protein>
    <recommendedName>
        <fullName evidence="1">Redox-sensing transcriptional repressor Rex</fullName>
    </recommendedName>
</protein>